<organism>
    <name type="scientific">Escherichia coli (strain SE11)</name>
    <dbReference type="NCBI Taxonomy" id="409438"/>
    <lineage>
        <taxon>Bacteria</taxon>
        <taxon>Pseudomonadati</taxon>
        <taxon>Pseudomonadota</taxon>
        <taxon>Gammaproteobacteria</taxon>
        <taxon>Enterobacterales</taxon>
        <taxon>Enterobacteriaceae</taxon>
        <taxon>Escherichia</taxon>
    </lineage>
</organism>
<dbReference type="EC" id="3.6.-.-" evidence="1"/>
<dbReference type="EMBL" id="AP009240">
    <property type="protein sequence ID" value="BAG79516.1"/>
    <property type="molecule type" value="Genomic_DNA"/>
</dbReference>
<dbReference type="RefSeq" id="WP_001282346.1">
    <property type="nucleotide sequence ID" value="NC_011415.1"/>
</dbReference>
<dbReference type="SMR" id="B6I3T9"/>
<dbReference type="GeneID" id="86861818"/>
<dbReference type="KEGG" id="ecy:ECSE_3992"/>
<dbReference type="HOGENOM" id="CLU_019624_4_1_6"/>
<dbReference type="Proteomes" id="UP000008199">
    <property type="component" value="Chromosome"/>
</dbReference>
<dbReference type="GO" id="GO:0005829">
    <property type="term" value="C:cytosol"/>
    <property type="evidence" value="ECO:0007669"/>
    <property type="project" value="TreeGrafter"/>
</dbReference>
<dbReference type="GO" id="GO:0005525">
    <property type="term" value="F:GTP binding"/>
    <property type="evidence" value="ECO:0007669"/>
    <property type="project" value="UniProtKB-UniRule"/>
</dbReference>
<dbReference type="GO" id="GO:0003924">
    <property type="term" value="F:GTPase activity"/>
    <property type="evidence" value="ECO:0007669"/>
    <property type="project" value="UniProtKB-UniRule"/>
</dbReference>
<dbReference type="GO" id="GO:0046872">
    <property type="term" value="F:metal ion binding"/>
    <property type="evidence" value="ECO:0007669"/>
    <property type="project" value="UniProtKB-KW"/>
</dbReference>
<dbReference type="GO" id="GO:0030488">
    <property type="term" value="P:tRNA methylation"/>
    <property type="evidence" value="ECO:0007669"/>
    <property type="project" value="TreeGrafter"/>
</dbReference>
<dbReference type="GO" id="GO:0002098">
    <property type="term" value="P:tRNA wobble uridine modification"/>
    <property type="evidence" value="ECO:0007669"/>
    <property type="project" value="TreeGrafter"/>
</dbReference>
<dbReference type="CDD" id="cd04164">
    <property type="entry name" value="trmE"/>
    <property type="match status" value="1"/>
</dbReference>
<dbReference type="CDD" id="cd14858">
    <property type="entry name" value="TrmE_N"/>
    <property type="match status" value="1"/>
</dbReference>
<dbReference type="FunFam" id="3.30.1360.120:FF:000001">
    <property type="entry name" value="tRNA modification GTPase MnmE"/>
    <property type="match status" value="1"/>
</dbReference>
<dbReference type="FunFam" id="3.40.50.300:FF:000249">
    <property type="entry name" value="tRNA modification GTPase MnmE"/>
    <property type="match status" value="1"/>
</dbReference>
<dbReference type="Gene3D" id="3.40.50.300">
    <property type="entry name" value="P-loop containing nucleotide triphosphate hydrolases"/>
    <property type="match status" value="1"/>
</dbReference>
<dbReference type="Gene3D" id="3.30.1360.120">
    <property type="entry name" value="Probable tRNA modification gtpase trme, domain 1"/>
    <property type="match status" value="1"/>
</dbReference>
<dbReference type="Gene3D" id="1.20.120.430">
    <property type="entry name" value="tRNA modification GTPase MnmE domain 2"/>
    <property type="match status" value="1"/>
</dbReference>
<dbReference type="HAMAP" id="MF_00379">
    <property type="entry name" value="GTPase_MnmE"/>
    <property type="match status" value="1"/>
</dbReference>
<dbReference type="InterPro" id="IPR031168">
    <property type="entry name" value="G_TrmE"/>
</dbReference>
<dbReference type="InterPro" id="IPR006073">
    <property type="entry name" value="GTP-bd"/>
</dbReference>
<dbReference type="InterPro" id="IPR018948">
    <property type="entry name" value="GTP-bd_TrmE_N"/>
</dbReference>
<dbReference type="InterPro" id="IPR004520">
    <property type="entry name" value="GTPase_MnmE"/>
</dbReference>
<dbReference type="InterPro" id="IPR027368">
    <property type="entry name" value="MnmE_dom2"/>
</dbReference>
<dbReference type="InterPro" id="IPR025867">
    <property type="entry name" value="MnmE_helical"/>
</dbReference>
<dbReference type="InterPro" id="IPR027417">
    <property type="entry name" value="P-loop_NTPase"/>
</dbReference>
<dbReference type="InterPro" id="IPR005225">
    <property type="entry name" value="Small_GTP-bd"/>
</dbReference>
<dbReference type="InterPro" id="IPR027266">
    <property type="entry name" value="TrmE/GcvT_dom1"/>
</dbReference>
<dbReference type="NCBIfam" id="TIGR00450">
    <property type="entry name" value="mnmE_trmE_thdF"/>
    <property type="match status" value="1"/>
</dbReference>
<dbReference type="NCBIfam" id="NF003661">
    <property type="entry name" value="PRK05291.1-3"/>
    <property type="match status" value="1"/>
</dbReference>
<dbReference type="NCBIfam" id="TIGR00231">
    <property type="entry name" value="small_GTP"/>
    <property type="match status" value="1"/>
</dbReference>
<dbReference type="PANTHER" id="PTHR42714">
    <property type="entry name" value="TRNA MODIFICATION GTPASE GTPBP3"/>
    <property type="match status" value="1"/>
</dbReference>
<dbReference type="PANTHER" id="PTHR42714:SF2">
    <property type="entry name" value="TRNA MODIFICATION GTPASE GTPBP3, MITOCHONDRIAL"/>
    <property type="match status" value="1"/>
</dbReference>
<dbReference type="Pfam" id="PF01926">
    <property type="entry name" value="MMR_HSR1"/>
    <property type="match status" value="1"/>
</dbReference>
<dbReference type="Pfam" id="PF12631">
    <property type="entry name" value="MnmE_helical"/>
    <property type="match status" value="1"/>
</dbReference>
<dbReference type="Pfam" id="PF10396">
    <property type="entry name" value="TrmE_N"/>
    <property type="match status" value="1"/>
</dbReference>
<dbReference type="SUPFAM" id="SSF52540">
    <property type="entry name" value="P-loop containing nucleoside triphosphate hydrolases"/>
    <property type="match status" value="1"/>
</dbReference>
<dbReference type="SUPFAM" id="SSF116878">
    <property type="entry name" value="TrmE connector domain"/>
    <property type="match status" value="1"/>
</dbReference>
<dbReference type="PROSITE" id="PS51709">
    <property type="entry name" value="G_TRME"/>
    <property type="match status" value="1"/>
</dbReference>
<evidence type="ECO:0000255" key="1">
    <source>
        <dbReference type="HAMAP-Rule" id="MF_00379"/>
    </source>
</evidence>
<accession>B6I3T9</accession>
<feature type="chain" id="PRO_1000197045" description="tRNA modification GTPase MnmE">
    <location>
        <begin position="1"/>
        <end position="454"/>
    </location>
</feature>
<feature type="domain" description="TrmE-type G">
    <location>
        <begin position="216"/>
        <end position="377"/>
    </location>
</feature>
<feature type="binding site" evidence="1">
    <location>
        <position position="23"/>
    </location>
    <ligand>
        <name>(6S)-5-formyl-5,6,7,8-tetrahydrofolate</name>
        <dbReference type="ChEBI" id="CHEBI:57457"/>
    </ligand>
</feature>
<feature type="binding site" evidence="1">
    <location>
        <position position="80"/>
    </location>
    <ligand>
        <name>(6S)-5-formyl-5,6,7,8-tetrahydrofolate</name>
        <dbReference type="ChEBI" id="CHEBI:57457"/>
    </ligand>
</feature>
<feature type="binding site" evidence="1">
    <location>
        <position position="120"/>
    </location>
    <ligand>
        <name>(6S)-5-formyl-5,6,7,8-tetrahydrofolate</name>
        <dbReference type="ChEBI" id="CHEBI:57457"/>
    </ligand>
</feature>
<feature type="binding site" evidence="1">
    <location>
        <begin position="226"/>
        <end position="231"/>
    </location>
    <ligand>
        <name>GTP</name>
        <dbReference type="ChEBI" id="CHEBI:37565"/>
    </ligand>
</feature>
<feature type="binding site" evidence="1">
    <location>
        <position position="226"/>
    </location>
    <ligand>
        <name>K(+)</name>
        <dbReference type="ChEBI" id="CHEBI:29103"/>
    </ligand>
</feature>
<feature type="binding site" evidence="1">
    <location>
        <position position="230"/>
    </location>
    <ligand>
        <name>Mg(2+)</name>
        <dbReference type="ChEBI" id="CHEBI:18420"/>
    </ligand>
</feature>
<feature type="binding site" evidence="1">
    <location>
        <begin position="245"/>
        <end position="251"/>
    </location>
    <ligand>
        <name>GTP</name>
        <dbReference type="ChEBI" id="CHEBI:37565"/>
    </ligand>
</feature>
<feature type="binding site" evidence="1">
    <location>
        <position position="245"/>
    </location>
    <ligand>
        <name>K(+)</name>
        <dbReference type="ChEBI" id="CHEBI:29103"/>
    </ligand>
</feature>
<feature type="binding site" evidence="1">
    <location>
        <position position="247"/>
    </location>
    <ligand>
        <name>K(+)</name>
        <dbReference type="ChEBI" id="CHEBI:29103"/>
    </ligand>
</feature>
<feature type="binding site" evidence="1">
    <location>
        <position position="250"/>
    </location>
    <ligand>
        <name>K(+)</name>
        <dbReference type="ChEBI" id="CHEBI:29103"/>
    </ligand>
</feature>
<feature type="binding site" evidence="1">
    <location>
        <position position="251"/>
    </location>
    <ligand>
        <name>Mg(2+)</name>
        <dbReference type="ChEBI" id="CHEBI:18420"/>
    </ligand>
</feature>
<feature type="binding site" evidence="1">
    <location>
        <begin position="270"/>
        <end position="273"/>
    </location>
    <ligand>
        <name>GTP</name>
        <dbReference type="ChEBI" id="CHEBI:37565"/>
    </ligand>
</feature>
<feature type="binding site" evidence="1">
    <location>
        <begin position="335"/>
        <end position="338"/>
    </location>
    <ligand>
        <name>GTP</name>
        <dbReference type="ChEBI" id="CHEBI:37565"/>
    </ligand>
</feature>
<feature type="binding site" evidence="1">
    <location>
        <begin position="358"/>
        <end position="360"/>
    </location>
    <ligand>
        <name>GTP</name>
        <dbReference type="ChEBI" id="CHEBI:37565"/>
    </ligand>
</feature>
<feature type="binding site" evidence="1">
    <location>
        <position position="454"/>
    </location>
    <ligand>
        <name>(6S)-5-formyl-5,6,7,8-tetrahydrofolate</name>
        <dbReference type="ChEBI" id="CHEBI:57457"/>
    </ligand>
</feature>
<comment type="function">
    <text evidence="1">Exhibits a very high intrinsic GTPase hydrolysis rate. Involved in the addition of a carboxymethylaminomethyl (cmnm) group at the wobble position (U34) of certain tRNAs, forming tRNA-cmnm(5)s(2)U34.</text>
</comment>
<comment type="cofactor">
    <cofactor evidence="1">
        <name>K(+)</name>
        <dbReference type="ChEBI" id="CHEBI:29103"/>
    </cofactor>
    <text evidence="1">Binds 1 potassium ion per subunit.</text>
</comment>
<comment type="subunit">
    <text evidence="1">Homodimer. Heterotetramer of two MnmE and two MnmG subunits.</text>
</comment>
<comment type="subcellular location">
    <subcellularLocation>
        <location evidence="1">Cytoplasm</location>
    </subcellularLocation>
</comment>
<comment type="similarity">
    <text evidence="1">Belongs to the TRAFAC class TrmE-Era-EngA-EngB-Septin-like GTPase superfamily. TrmE GTPase family.</text>
</comment>
<gene>
    <name evidence="1" type="primary">mnmE</name>
    <name evidence="1" type="synonym">trmE</name>
    <name type="ordered locus">ECSE_3992</name>
</gene>
<keyword id="KW-0963">Cytoplasm</keyword>
<keyword id="KW-0342">GTP-binding</keyword>
<keyword id="KW-0378">Hydrolase</keyword>
<keyword id="KW-0460">Magnesium</keyword>
<keyword id="KW-0479">Metal-binding</keyword>
<keyword id="KW-0547">Nucleotide-binding</keyword>
<keyword id="KW-0630">Potassium</keyword>
<keyword id="KW-0819">tRNA processing</keyword>
<protein>
    <recommendedName>
        <fullName evidence="1">tRNA modification GTPase MnmE</fullName>
        <ecNumber evidence="1">3.6.-.-</ecNumber>
    </recommendedName>
</protein>
<proteinExistence type="inferred from homology"/>
<name>MNME_ECOSE</name>
<reference key="1">
    <citation type="journal article" date="2008" name="DNA Res.">
        <title>Complete genome sequence and comparative analysis of the wild-type commensal Escherichia coli strain SE11 isolated from a healthy adult.</title>
        <authorList>
            <person name="Oshima K."/>
            <person name="Toh H."/>
            <person name="Ogura Y."/>
            <person name="Sasamoto H."/>
            <person name="Morita H."/>
            <person name="Park S.-H."/>
            <person name="Ooka T."/>
            <person name="Iyoda S."/>
            <person name="Taylor T.D."/>
            <person name="Hayashi T."/>
            <person name="Itoh K."/>
            <person name="Hattori M."/>
        </authorList>
    </citation>
    <scope>NUCLEOTIDE SEQUENCE [LARGE SCALE GENOMIC DNA]</scope>
    <source>
        <strain>SE11</strain>
    </source>
</reference>
<sequence>MSDNDTIVAQATPPGRGGVGILRISGFKAREVAETVLGKLPKPRYADYLPFKDADGSVLDQGIALWFPGPNSFTGEDVLELQGHGGPVILDLLLKRILTIPGLRIARPGEFSERAFLNDKLDLAQAEAIADLIDASSEQAARSALNSLQGAFSARVNHLVEALTHLRIYVEAAIDFPDEEIDFLSDGKIEAQLNDVIADLDAVRAEARQGSLLREGMKVVIAGRPNAGKSSLLNALAGREAAIVTDIAGTTRDVLREHIHIDGMPLHIIDTAGLREASDEVERIGIERAWQEIEQADRVLFMVDGTTTDAVDPAEIWPEFIARLPAKLPITVVRNKADITGETLGMSEVNGHALIRLSARTGEGVDVLRNHLKQSMGFDTNMEGGFLARRRHLQALEQAAEHLQQGKAQLLGAWAGELLAEELRLAQQNLSEITGEFTSDDLLGRIFSSFCIGK</sequence>